<comment type="function">
    <text evidence="2">Catalyzes the reversible phosphorolytic breakdown of the N-glycosidic bond in the beta-(deoxy)ribonucleoside molecules, with the formation of the corresponding free purine bases and pentose-1-phosphate.</text>
</comment>
<comment type="catalytic activity">
    <reaction evidence="2">
        <text>a purine D-ribonucleoside + phosphate = a purine nucleobase + alpha-D-ribose 1-phosphate</text>
        <dbReference type="Rhea" id="RHEA:19805"/>
        <dbReference type="ChEBI" id="CHEBI:26386"/>
        <dbReference type="ChEBI" id="CHEBI:43474"/>
        <dbReference type="ChEBI" id="CHEBI:57720"/>
        <dbReference type="ChEBI" id="CHEBI:142355"/>
        <dbReference type="EC" id="2.4.2.1"/>
    </reaction>
</comment>
<comment type="catalytic activity">
    <reaction evidence="2">
        <text>a purine 2'-deoxy-D-ribonucleoside + phosphate = a purine nucleobase + 2-deoxy-alpha-D-ribose 1-phosphate</text>
        <dbReference type="Rhea" id="RHEA:36431"/>
        <dbReference type="ChEBI" id="CHEBI:26386"/>
        <dbReference type="ChEBI" id="CHEBI:43474"/>
        <dbReference type="ChEBI" id="CHEBI:57259"/>
        <dbReference type="ChEBI" id="CHEBI:142361"/>
        <dbReference type="EC" id="2.4.2.1"/>
    </reaction>
</comment>
<comment type="subunit">
    <text evidence="2">Homohexamer; trimer of homodimers.</text>
</comment>
<comment type="similarity">
    <text evidence="2">Belongs to the PNP/UDP phosphorylase family.</text>
</comment>
<gene>
    <name evidence="2" type="primary">deoD</name>
    <name type="ordered locus">STY4921</name>
    <name type="ordered locus">t4613</name>
</gene>
<evidence type="ECO:0000250" key="1">
    <source>
        <dbReference type="UniProtKB" id="P50389"/>
    </source>
</evidence>
<evidence type="ECO:0000255" key="2">
    <source>
        <dbReference type="HAMAP-Rule" id="MF_01627"/>
    </source>
</evidence>
<proteinExistence type="inferred from homology"/>
<protein>
    <recommendedName>
        <fullName evidence="2">Purine nucleoside phosphorylase DeoD-type</fullName>
        <shortName evidence="2">PNP</shortName>
        <ecNumber evidence="2">2.4.2.1</ecNumber>
    </recommendedName>
</protein>
<sequence>MATPHINAEMGDFADVVLMPGDPLRAKHIAETFLEDVREVNNVRGMLGFTGTYKGRKISVMGHGMGIPSCSIYTKELITDFGVKKIIRVGSCGAVRMDVKLRDVVIGMGACTDSKVNRIRFKDHDFAAIADFDMVRNAVDAAKALGVDARVGNLFSADLFYSPDGEMFDVMEKYGVLGVEMEAAGIYGVAAEFGAKALTICTVSDHIRTHEQTTAAERQTTFNDMIKIALESVLLGDKE</sequence>
<feature type="chain" id="PRO_0000063157" description="Purine nucleoside phosphorylase DeoD-type">
    <location>
        <begin position="1"/>
        <end position="239"/>
    </location>
</feature>
<feature type="active site" description="Proton donor" evidence="2">
    <location>
        <position position="205"/>
    </location>
</feature>
<feature type="binding site" evidence="1">
    <location>
        <position position="5"/>
    </location>
    <ligand>
        <name>a purine D-ribonucleoside</name>
        <dbReference type="ChEBI" id="CHEBI:142355"/>
        <note>ligand shared between dimeric partners</note>
    </ligand>
</feature>
<feature type="binding site" description="in other chain" evidence="1">
    <location>
        <position position="21"/>
    </location>
    <ligand>
        <name>phosphate</name>
        <dbReference type="ChEBI" id="CHEBI:43474"/>
        <note>ligand shared between dimeric partners</note>
    </ligand>
</feature>
<feature type="binding site" description="in other chain" evidence="1">
    <location>
        <position position="25"/>
    </location>
    <ligand>
        <name>phosphate</name>
        <dbReference type="ChEBI" id="CHEBI:43474"/>
        <note>ligand shared between dimeric partners</note>
    </ligand>
</feature>
<feature type="binding site" evidence="1">
    <location>
        <position position="44"/>
    </location>
    <ligand>
        <name>phosphate</name>
        <dbReference type="ChEBI" id="CHEBI:43474"/>
        <note>ligand shared between dimeric partners</note>
    </ligand>
</feature>
<feature type="binding site" description="in other chain" evidence="1">
    <location>
        <begin position="88"/>
        <end position="91"/>
    </location>
    <ligand>
        <name>phosphate</name>
        <dbReference type="ChEBI" id="CHEBI:43474"/>
        <note>ligand shared between dimeric partners</note>
    </ligand>
</feature>
<feature type="binding site" description="in other chain" evidence="1">
    <location>
        <begin position="180"/>
        <end position="182"/>
    </location>
    <ligand>
        <name>a purine D-ribonucleoside</name>
        <dbReference type="ChEBI" id="CHEBI:142355"/>
        <note>ligand shared between dimeric partners</note>
    </ligand>
</feature>
<feature type="binding site" description="in other chain" evidence="1">
    <location>
        <begin position="204"/>
        <end position="205"/>
    </location>
    <ligand>
        <name>a purine D-ribonucleoside</name>
        <dbReference type="ChEBI" id="CHEBI:142355"/>
        <note>ligand shared between dimeric partners</note>
    </ligand>
</feature>
<feature type="site" description="Important for catalytic activity" evidence="2">
    <location>
        <position position="218"/>
    </location>
</feature>
<reference key="1">
    <citation type="journal article" date="2001" name="Nature">
        <title>Complete genome sequence of a multiple drug resistant Salmonella enterica serovar Typhi CT18.</title>
        <authorList>
            <person name="Parkhill J."/>
            <person name="Dougan G."/>
            <person name="James K.D."/>
            <person name="Thomson N.R."/>
            <person name="Pickard D."/>
            <person name="Wain J."/>
            <person name="Churcher C.M."/>
            <person name="Mungall K.L."/>
            <person name="Bentley S.D."/>
            <person name="Holden M.T.G."/>
            <person name="Sebaihia M."/>
            <person name="Baker S."/>
            <person name="Basham D."/>
            <person name="Brooks K."/>
            <person name="Chillingworth T."/>
            <person name="Connerton P."/>
            <person name="Cronin A."/>
            <person name="Davis P."/>
            <person name="Davies R.M."/>
            <person name="Dowd L."/>
            <person name="White N."/>
            <person name="Farrar J."/>
            <person name="Feltwell T."/>
            <person name="Hamlin N."/>
            <person name="Haque A."/>
            <person name="Hien T.T."/>
            <person name="Holroyd S."/>
            <person name="Jagels K."/>
            <person name="Krogh A."/>
            <person name="Larsen T.S."/>
            <person name="Leather S."/>
            <person name="Moule S."/>
            <person name="O'Gaora P."/>
            <person name="Parry C."/>
            <person name="Quail M.A."/>
            <person name="Rutherford K.M."/>
            <person name="Simmonds M."/>
            <person name="Skelton J."/>
            <person name="Stevens K."/>
            <person name="Whitehead S."/>
            <person name="Barrell B.G."/>
        </authorList>
    </citation>
    <scope>NUCLEOTIDE SEQUENCE [LARGE SCALE GENOMIC DNA]</scope>
    <source>
        <strain>CT18</strain>
    </source>
</reference>
<reference key="2">
    <citation type="journal article" date="2003" name="J. Bacteriol.">
        <title>Comparative genomics of Salmonella enterica serovar Typhi strains Ty2 and CT18.</title>
        <authorList>
            <person name="Deng W."/>
            <person name="Liou S.-R."/>
            <person name="Plunkett G. III"/>
            <person name="Mayhew G.F."/>
            <person name="Rose D.J."/>
            <person name="Burland V."/>
            <person name="Kodoyianni V."/>
            <person name="Schwartz D.C."/>
            <person name="Blattner F.R."/>
        </authorList>
    </citation>
    <scope>NUCLEOTIDE SEQUENCE [LARGE SCALE GENOMIC DNA]</scope>
    <source>
        <strain>ATCC 700931 / Ty2</strain>
    </source>
</reference>
<organism>
    <name type="scientific">Salmonella typhi</name>
    <dbReference type="NCBI Taxonomy" id="90370"/>
    <lineage>
        <taxon>Bacteria</taxon>
        <taxon>Pseudomonadati</taxon>
        <taxon>Pseudomonadota</taxon>
        <taxon>Gammaproteobacteria</taxon>
        <taxon>Enterobacterales</taxon>
        <taxon>Enterobacteriaceae</taxon>
        <taxon>Salmonella</taxon>
    </lineage>
</organism>
<dbReference type="EC" id="2.4.2.1" evidence="2"/>
<dbReference type="EMBL" id="AL513382">
    <property type="protein sequence ID" value="CAD03405.1"/>
    <property type="molecule type" value="Genomic_DNA"/>
</dbReference>
<dbReference type="EMBL" id="AE014613">
    <property type="protein sequence ID" value="AAO72045.1"/>
    <property type="molecule type" value="Genomic_DNA"/>
</dbReference>
<dbReference type="RefSeq" id="NP_458982.1">
    <property type="nucleotide sequence ID" value="NC_003198.1"/>
</dbReference>
<dbReference type="RefSeq" id="WP_000224864.1">
    <property type="nucleotide sequence ID" value="NZ_WSUR01000014.1"/>
</dbReference>
<dbReference type="SMR" id="Q8Z0U2"/>
<dbReference type="STRING" id="220341.gene:17588739"/>
<dbReference type="GeneID" id="89550598"/>
<dbReference type="KEGG" id="stt:t4613"/>
<dbReference type="KEGG" id="sty:STY4921"/>
<dbReference type="PATRIC" id="fig|220341.7.peg.5042"/>
<dbReference type="eggNOG" id="COG0813">
    <property type="taxonomic scope" value="Bacteria"/>
</dbReference>
<dbReference type="HOGENOM" id="CLU_068457_2_0_6"/>
<dbReference type="OMA" id="PQCLLCG"/>
<dbReference type="OrthoDB" id="9782889at2"/>
<dbReference type="Proteomes" id="UP000000541">
    <property type="component" value="Chromosome"/>
</dbReference>
<dbReference type="Proteomes" id="UP000002670">
    <property type="component" value="Chromosome"/>
</dbReference>
<dbReference type="GO" id="GO:0005829">
    <property type="term" value="C:cytosol"/>
    <property type="evidence" value="ECO:0007669"/>
    <property type="project" value="TreeGrafter"/>
</dbReference>
<dbReference type="GO" id="GO:0004731">
    <property type="term" value="F:purine-nucleoside phosphorylase activity"/>
    <property type="evidence" value="ECO:0007669"/>
    <property type="project" value="UniProtKB-UniRule"/>
</dbReference>
<dbReference type="GO" id="GO:0006152">
    <property type="term" value="P:purine nucleoside catabolic process"/>
    <property type="evidence" value="ECO:0007669"/>
    <property type="project" value="TreeGrafter"/>
</dbReference>
<dbReference type="CDD" id="cd09006">
    <property type="entry name" value="PNP_EcPNPI-like"/>
    <property type="match status" value="1"/>
</dbReference>
<dbReference type="FunFam" id="3.40.50.1580:FF:000002">
    <property type="entry name" value="Purine nucleoside phosphorylase DeoD-type"/>
    <property type="match status" value="1"/>
</dbReference>
<dbReference type="Gene3D" id="3.40.50.1580">
    <property type="entry name" value="Nucleoside phosphorylase domain"/>
    <property type="match status" value="1"/>
</dbReference>
<dbReference type="HAMAP" id="MF_01627">
    <property type="entry name" value="Pur_nucleosid_phosp"/>
    <property type="match status" value="1"/>
</dbReference>
<dbReference type="InterPro" id="IPR004402">
    <property type="entry name" value="DeoD-type"/>
</dbReference>
<dbReference type="InterPro" id="IPR018016">
    <property type="entry name" value="Nucleoside_phosphorylase_CS"/>
</dbReference>
<dbReference type="InterPro" id="IPR000845">
    <property type="entry name" value="Nucleoside_phosphorylase_d"/>
</dbReference>
<dbReference type="InterPro" id="IPR035994">
    <property type="entry name" value="Nucleoside_phosphorylase_sf"/>
</dbReference>
<dbReference type="NCBIfam" id="TIGR00107">
    <property type="entry name" value="deoD"/>
    <property type="match status" value="1"/>
</dbReference>
<dbReference type="NCBIfam" id="NF004489">
    <property type="entry name" value="PRK05819.1"/>
    <property type="match status" value="1"/>
</dbReference>
<dbReference type="NCBIfam" id="NF009914">
    <property type="entry name" value="PRK13374.1"/>
    <property type="match status" value="1"/>
</dbReference>
<dbReference type="PANTHER" id="PTHR43691:SF2">
    <property type="entry name" value="PURINE NUCLEOSIDE PHOSPHORYLASE DEOD-TYPE"/>
    <property type="match status" value="1"/>
</dbReference>
<dbReference type="PANTHER" id="PTHR43691">
    <property type="entry name" value="URIDINE PHOSPHORYLASE"/>
    <property type="match status" value="1"/>
</dbReference>
<dbReference type="Pfam" id="PF01048">
    <property type="entry name" value="PNP_UDP_1"/>
    <property type="match status" value="1"/>
</dbReference>
<dbReference type="SUPFAM" id="SSF53167">
    <property type="entry name" value="Purine and uridine phosphorylases"/>
    <property type="match status" value="1"/>
</dbReference>
<dbReference type="PROSITE" id="PS01232">
    <property type="entry name" value="PNP_UDP_1"/>
    <property type="match status" value="1"/>
</dbReference>
<accession>Q8Z0U2</accession>
<accession>Q7C4T5</accession>
<name>DEOD_SALTI</name>
<keyword id="KW-0328">Glycosyltransferase</keyword>
<keyword id="KW-0808">Transferase</keyword>